<feature type="chain" id="PRO_0000231876" description="Homoserine O-succinyltransferase">
    <location>
        <begin position="1"/>
        <end position="377"/>
    </location>
</feature>
<feature type="domain" description="AB hydrolase-1" evidence="1">
    <location>
        <begin position="50"/>
        <end position="359"/>
    </location>
</feature>
<feature type="active site" description="Nucleophile" evidence="1">
    <location>
        <position position="156"/>
    </location>
</feature>
<feature type="active site" evidence="1">
    <location>
        <position position="321"/>
    </location>
</feature>
<feature type="active site" evidence="1">
    <location>
        <position position="354"/>
    </location>
</feature>
<feature type="binding site" evidence="1">
    <location>
        <position position="226"/>
    </location>
    <ligand>
        <name>substrate</name>
    </ligand>
</feature>
<feature type="binding site" evidence="1">
    <location>
        <position position="355"/>
    </location>
    <ligand>
        <name>substrate</name>
    </ligand>
</feature>
<feature type="site" description="Important for acyl-CoA specificity" evidence="1">
    <location>
        <position position="323"/>
    </location>
</feature>
<name>METXS_NITMU</name>
<gene>
    <name evidence="1" type="primary">metXS</name>
    <name type="ordered locus">Nmul_A0221</name>
</gene>
<keyword id="KW-0012">Acyltransferase</keyword>
<keyword id="KW-0028">Amino-acid biosynthesis</keyword>
<keyword id="KW-0963">Cytoplasm</keyword>
<keyword id="KW-0486">Methionine biosynthesis</keyword>
<keyword id="KW-1185">Reference proteome</keyword>
<keyword id="KW-0808">Transferase</keyword>
<accession>Q2YCJ2</accession>
<comment type="function">
    <text evidence="1">Transfers a succinyl group from succinyl-CoA to L-homoserine, forming succinyl-L-homoserine.</text>
</comment>
<comment type="catalytic activity">
    <reaction evidence="1">
        <text>L-homoserine + succinyl-CoA = O-succinyl-L-homoserine + CoA</text>
        <dbReference type="Rhea" id="RHEA:22008"/>
        <dbReference type="ChEBI" id="CHEBI:57287"/>
        <dbReference type="ChEBI" id="CHEBI:57292"/>
        <dbReference type="ChEBI" id="CHEBI:57476"/>
        <dbReference type="ChEBI" id="CHEBI:57661"/>
        <dbReference type="EC" id="2.3.1.46"/>
    </reaction>
</comment>
<comment type="pathway">
    <text evidence="1">Amino-acid biosynthesis; L-methionine biosynthesis via de novo pathway; O-succinyl-L-homoserine from L-homoserine: step 1/1.</text>
</comment>
<comment type="subunit">
    <text evidence="1">Homodimer.</text>
</comment>
<comment type="subcellular location">
    <subcellularLocation>
        <location evidence="1">Cytoplasm</location>
    </subcellularLocation>
</comment>
<comment type="similarity">
    <text evidence="1">Belongs to the AB hydrolase superfamily. MetX family.</text>
</comment>
<protein>
    <recommendedName>
        <fullName evidence="1">Homoserine O-succinyltransferase</fullName>
        <shortName evidence="1">HST</shortName>
        <ecNumber evidence="1">2.3.1.46</ecNumber>
    </recommendedName>
    <alternativeName>
        <fullName evidence="1">Homoserine transsuccinylase</fullName>
        <shortName evidence="1">HTS</shortName>
    </alternativeName>
</protein>
<reference key="1">
    <citation type="submission" date="2005-08" db="EMBL/GenBank/DDBJ databases">
        <title>Complete sequence of chromosome 1 of Nitrosospira multiformis ATCC 25196.</title>
        <authorList>
            <person name="Copeland A."/>
            <person name="Lucas S."/>
            <person name="Lapidus A."/>
            <person name="Barry K."/>
            <person name="Detter J.C."/>
            <person name="Glavina T."/>
            <person name="Hammon N."/>
            <person name="Israni S."/>
            <person name="Pitluck S."/>
            <person name="Chain P."/>
            <person name="Malfatti S."/>
            <person name="Shin M."/>
            <person name="Vergez L."/>
            <person name="Schmutz J."/>
            <person name="Larimer F."/>
            <person name="Land M."/>
            <person name="Hauser L."/>
            <person name="Kyrpides N."/>
            <person name="Lykidis A."/>
            <person name="Richardson P."/>
        </authorList>
    </citation>
    <scope>NUCLEOTIDE SEQUENCE [LARGE SCALE GENOMIC DNA]</scope>
    <source>
        <strain>ATCC 25196 / NCIMB 11849 / C 71</strain>
    </source>
</reference>
<proteinExistence type="inferred from homology"/>
<dbReference type="EC" id="2.3.1.46" evidence="1"/>
<dbReference type="EMBL" id="CP000103">
    <property type="protein sequence ID" value="ABB73529.1"/>
    <property type="molecule type" value="Genomic_DNA"/>
</dbReference>
<dbReference type="RefSeq" id="WP_011379583.1">
    <property type="nucleotide sequence ID" value="NC_007614.1"/>
</dbReference>
<dbReference type="SMR" id="Q2YCJ2"/>
<dbReference type="STRING" id="323848.Nmul_A0221"/>
<dbReference type="ESTHER" id="nitmu-metx">
    <property type="family name" value="Homoserine_transacetylase"/>
</dbReference>
<dbReference type="KEGG" id="nmu:Nmul_A0221"/>
<dbReference type="eggNOG" id="COG2021">
    <property type="taxonomic scope" value="Bacteria"/>
</dbReference>
<dbReference type="HOGENOM" id="CLU_028760_1_2_4"/>
<dbReference type="OrthoDB" id="9800754at2"/>
<dbReference type="UniPathway" id="UPA00051">
    <property type="reaction ID" value="UER00075"/>
</dbReference>
<dbReference type="Proteomes" id="UP000002718">
    <property type="component" value="Chromosome"/>
</dbReference>
<dbReference type="GO" id="GO:0005737">
    <property type="term" value="C:cytoplasm"/>
    <property type="evidence" value="ECO:0007669"/>
    <property type="project" value="UniProtKB-SubCell"/>
</dbReference>
<dbReference type="GO" id="GO:0004414">
    <property type="term" value="F:homoserine O-acetyltransferase activity"/>
    <property type="evidence" value="ECO:0007669"/>
    <property type="project" value="TreeGrafter"/>
</dbReference>
<dbReference type="GO" id="GO:0008899">
    <property type="term" value="F:homoserine O-succinyltransferase activity"/>
    <property type="evidence" value="ECO:0007669"/>
    <property type="project" value="UniProtKB-UniRule"/>
</dbReference>
<dbReference type="GO" id="GO:0009092">
    <property type="term" value="P:homoserine metabolic process"/>
    <property type="evidence" value="ECO:0007669"/>
    <property type="project" value="TreeGrafter"/>
</dbReference>
<dbReference type="GO" id="GO:0009086">
    <property type="term" value="P:methionine biosynthetic process"/>
    <property type="evidence" value="ECO:0007669"/>
    <property type="project" value="UniProtKB-UniRule"/>
</dbReference>
<dbReference type="FunFam" id="1.10.1740.110:FF:000001">
    <property type="entry name" value="Homoserine O-acetyltransferase"/>
    <property type="match status" value="1"/>
</dbReference>
<dbReference type="Gene3D" id="1.10.1740.110">
    <property type="match status" value="1"/>
</dbReference>
<dbReference type="Gene3D" id="3.40.50.1820">
    <property type="entry name" value="alpha/beta hydrolase"/>
    <property type="match status" value="1"/>
</dbReference>
<dbReference type="HAMAP" id="MF_00296">
    <property type="entry name" value="MetX_acyltransf"/>
    <property type="match status" value="1"/>
</dbReference>
<dbReference type="InterPro" id="IPR000073">
    <property type="entry name" value="AB_hydrolase_1"/>
</dbReference>
<dbReference type="InterPro" id="IPR029058">
    <property type="entry name" value="AB_hydrolase_fold"/>
</dbReference>
<dbReference type="InterPro" id="IPR008220">
    <property type="entry name" value="HAT_MetX-like"/>
</dbReference>
<dbReference type="NCBIfam" id="TIGR01392">
    <property type="entry name" value="homoserO_Ac_trn"/>
    <property type="match status" value="1"/>
</dbReference>
<dbReference type="NCBIfam" id="NF001209">
    <property type="entry name" value="PRK00175.1"/>
    <property type="match status" value="1"/>
</dbReference>
<dbReference type="PANTHER" id="PTHR32268">
    <property type="entry name" value="HOMOSERINE O-ACETYLTRANSFERASE"/>
    <property type="match status" value="1"/>
</dbReference>
<dbReference type="PANTHER" id="PTHR32268:SF11">
    <property type="entry name" value="HOMOSERINE O-ACETYLTRANSFERASE"/>
    <property type="match status" value="1"/>
</dbReference>
<dbReference type="Pfam" id="PF00561">
    <property type="entry name" value="Abhydrolase_1"/>
    <property type="match status" value="1"/>
</dbReference>
<dbReference type="PIRSF" id="PIRSF000443">
    <property type="entry name" value="Homoser_Ac_trans"/>
    <property type="match status" value="1"/>
</dbReference>
<dbReference type="SUPFAM" id="SSF53474">
    <property type="entry name" value="alpha/beta-Hydrolases"/>
    <property type="match status" value="1"/>
</dbReference>
<sequence>MLMQDSNSFSTVTPQVARFDTPLHLKSGAVLDSYELVYETYGELNAARSNAVLVCHALSGNHHLAGLYDDNPKSAGWWNNMIGPGKSIDTQKFFLIGVNNLGGCHGSTGPASIDVRTGKCYGPNFPVVTVEDWVQTQVRLADYLGIDQFAAVAGGSLGGMQALQWTLDFPERVRHALVIAAAAKLTAQNIAFNDVARQAIITDPDFHGGDYYSHGVIPRRGLRLARMLGHITYLSDDSMAAKFGRELRNGALAFGYDVEFEIESYLRYQGDKFASQFDANTYLLMTKALDYFDPAFPHNNDLSAAFRFARANFLVLSFTTDWRFSPERSRAIVRALLDNELNVSYAEITSSHGHDSFLMEDRHYHRLVRAYMDNVVV</sequence>
<organism>
    <name type="scientific">Nitrosospira multiformis (strain ATCC 25196 / NCIMB 11849 / C 71)</name>
    <dbReference type="NCBI Taxonomy" id="323848"/>
    <lineage>
        <taxon>Bacteria</taxon>
        <taxon>Pseudomonadati</taxon>
        <taxon>Pseudomonadota</taxon>
        <taxon>Betaproteobacteria</taxon>
        <taxon>Nitrosomonadales</taxon>
        <taxon>Nitrosomonadaceae</taxon>
        <taxon>Nitrosospira</taxon>
    </lineage>
</organism>
<evidence type="ECO:0000255" key="1">
    <source>
        <dbReference type="HAMAP-Rule" id="MF_00296"/>
    </source>
</evidence>